<evidence type="ECO:0000250" key="1">
    <source>
        <dbReference type="UniProtKB" id="P28630"/>
    </source>
</evidence>
<evidence type="ECO:0000250" key="2">
    <source>
        <dbReference type="UniProtKB" id="P54459"/>
    </source>
</evidence>
<evidence type="ECO:0000305" key="3"/>
<sequence>METTIFQFQKTFFTKPPKERVFVLHGEEQYLIRTFLSKLKEKYGENYTVLWGDEISEEEFYTALSETSIFGGSKEKAVVIYNFGDFLKKLGRKKKEKERLIKVLRNVKSNYVFIVYDAKLQKQELSSEPLKSVASFGGIVVANRLSKERIKQLVLKKFKEKGINVENDALEYLLQLTGYNLMELKLEVEKLIDYASEKKILTLDEVKRVAFSVSENVNVFEFVDLLLLKDYEKALKVLDSLISFGIHPLQIMKILSSYALKLYTLKRLEEKGEDLNKAMESVGIKNNFLKMKFKSYLKANSKEDLKNLILSLQRIDAFSKLYFQDTVQLLRDFLTSRLEREVVKNTSHGG</sequence>
<gene>
    <name evidence="3" type="primary">holA</name>
    <name type="ordered locus">aq_1104</name>
</gene>
<comment type="function">
    <text evidence="1">Part of the beta sliding clamp loading complex, which hydrolyzes ATP to load the beta clamp onto primed DNA to form the DNA replication pre-initiation complex. DNA polymerase III is a complex, multichain enzyme responsible for most of the replicative synthesis in bacteria. This DNA polymerase also exhibits 3'-5' exonuclease activity. The delta subunit is the wrench that will open the beta subunit dimer. The DNA clamp loading complex (tau(3),delta,delta') is thought to load beta dimers onto DNA by binding ATP which alters the complex's conformation so it can bind beta sliding clamp dimers and open them at one interface. Primed DNA is recognized, ATP is hydrolyzed releasing the clamp loading complex and closing the beta sliding clamp ring around the primed DNA.</text>
</comment>
<comment type="catalytic activity">
    <reaction>
        <text>DNA(n) + a 2'-deoxyribonucleoside 5'-triphosphate = DNA(n+1) + diphosphate</text>
        <dbReference type="Rhea" id="RHEA:22508"/>
        <dbReference type="Rhea" id="RHEA-COMP:17339"/>
        <dbReference type="Rhea" id="RHEA-COMP:17340"/>
        <dbReference type="ChEBI" id="CHEBI:33019"/>
        <dbReference type="ChEBI" id="CHEBI:61560"/>
        <dbReference type="ChEBI" id="CHEBI:173112"/>
        <dbReference type="EC" id="2.7.7.7"/>
    </reaction>
</comment>
<comment type="subunit">
    <text evidence="1 2">Component of the DNA clamp loading complex consisting of tau(3):delta(1):delta'(1) (By similarity). The DNA polymerase III holoenzyme complex contains at least 10 different subunits organized into 3 functionally essential subassemblies: the Pol III core, the beta sliding clamp processivity factor and the clamp-loading complex. The Pol III core (subunits alpha, epsilon and theta) contains the polymerase and the 3'-5' exonuclease proofreading activities. The polymerase is tethered to the template via the dimeric beta sliding clamp processivity factor. The DNA clamp-loading complex assembles the beta sliding clamp onto the primed template and plays a central role in the organization and communication at the replication fork (By similarity).</text>
</comment>
<comment type="similarity">
    <text evidence="3">Belongs to the DNA polymerase HolA subunit family.</text>
</comment>
<accession>O67189</accession>
<dbReference type="EC" id="2.7.7.7"/>
<dbReference type="EMBL" id="AE000657">
    <property type="protein sequence ID" value="AAC07153.1"/>
    <property type="molecule type" value="Genomic_DNA"/>
</dbReference>
<dbReference type="PIR" id="B70395">
    <property type="entry name" value="B70395"/>
</dbReference>
<dbReference type="RefSeq" id="NP_213752.1">
    <property type="nucleotide sequence ID" value="NC_000918.1"/>
</dbReference>
<dbReference type="RefSeq" id="WP_010880690.1">
    <property type="nucleotide sequence ID" value="NC_000918.1"/>
</dbReference>
<dbReference type="SMR" id="O67189"/>
<dbReference type="STRING" id="224324.aq_1104"/>
<dbReference type="EnsemblBacteria" id="AAC07153">
    <property type="protein sequence ID" value="AAC07153"/>
    <property type="gene ID" value="aq_1104"/>
</dbReference>
<dbReference type="KEGG" id="aae:aq_1104"/>
<dbReference type="eggNOG" id="COG1466">
    <property type="taxonomic scope" value="Bacteria"/>
</dbReference>
<dbReference type="HOGENOM" id="CLU_072596_0_0_0"/>
<dbReference type="InParanoid" id="O67189"/>
<dbReference type="OrthoDB" id="10246at2"/>
<dbReference type="Proteomes" id="UP000000798">
    <property type="component" value="Chromosome"/>
</dbReference>
<dbReference type="GO" id="GO:0009360">
    <property type="term" value="C:DNA polymerase III complex"/>
    <property type="evidence" value="ECO:0000318"/>
    <property type="project" value="GO_Central"/>
</dbReference>
<dbReference type="GO" id="GO:0003677">
    <property type="term" value="F:DNA binding"/>
    <property type="evidence" value="ECO:0007669"/>
    <property type="project" value="InterPro"/>
</dbReference>
<dbReference type="GO" id="GO:0003887">
    <property type="term" value="F:DNA-directed DNA polymerase activity"/>
    <property type="evidence" value="ECO:0007669"/>
    <property type="project" value="UniProtKB-KW"/>
</dbReference>
<dbReference type="GO" id="GO:0006261">
    <property type="term" value="P:DNA-templated DNA replication"/>
    <property type="evidence" value="ECO:0000318"/>
    <property type="project" value="GO_Central"/>
</dbReference>
<dbReference type="Gene3D" id="1.10.8.60">
    <property type="match status" value="1"/>
</dbReference>
<dbReference type="Gene3D" id="1.20.272.10">
    <property type="match status" value="1"/>
</dbReference>
<dbReference type="Gene3D" id="3.40.50.300">
    <property type="entry name" value="P-loop containing nucleotide triphosphate hydrolases"/>
    <property type="match status" value="1"/>
</dbReference>
<dbReference type="InterPro" id="IPR008921">
    <property type="entry name" value="DNA_pol3_clamp-load_cplx_C"/>
</dbReference>
<dbReference type="InterPro" id="IPR048466">
    <property type="entry name" value="DNA_pol3_delta-like_C"/>
</dbReference>
<dbReference type="InterPro" id="IPR005790">
    <property type="entry name" value="DNA_polIII_delta"/>
</dbReference>
<dbReference type="InterPro" id="IPR027417">
    <property type="entry name" value="P-loop_NTPase"/>
</dbReference>
<dbReference type="NCBIfam" id="TIGR01128">
    <property type="entry name" value="holA"/>
    <property type="match status" value="1"/>
</dbReference>
<dbReference type="PANTHER" id="PTHR34388">
    <property type="entry name" value="DNA POLYMERASE III SUBUNIT DELTA"/>
    <property type="match status" value="1"/>
</dbReference>
<dbReference type="PANTHER" id="PTHR34388:SF1">
    <property type="entry name" value="DNA POLYMERASE III SUBUNIT DELTA"/>
    <property type="match status" value="1"/>
</dbReference>
<dbReference type="Pfam" id="PF21694">
    <property type="entry name" value="DNA_pol3_delta_C"/>
    <property type="match status" value="1"/>
</dbReference>
<dbReference type="SUPFAM" id="SSF52540">
    <property type="entry name" value="P-loop containing nucleoside triphosphate hydrolases"/>
    <property type="match status" value="1"/>
</dbReference>
<dbReference type="SUPFAM" id="SSF48019">
    <property type="entry name" value="post-AAA+ oligomerization domain-like"/>
    <property type="match status" value="1"/>
</dbReference>
<proteinExistence type="inferred from homology"/>
<feature type="chain" id="PRO_0000186901" description="Probable DNA polymerase III subunit delta">
    <location>
        <begin position="1"/>
        <end position="350"/>
    </location>
</feature>
<keyword id="KW-0235">DNA replication</keyword>
<keyword id="KW-0239">DNA-directed DNA polymerase</keyword>
<keyword id="KW-0548">Nucleotidyltransferase</keyword>
<keyword id="KW-1185">Reference proteome</keyword>
<keyword id="KW-0808">Transferase</keyword>
<organism>
    <name type="scientific">Aquifex aeolicus (strain VF5)</name>
    <dbReference type="NCBI Taxonomy" id="224324"/>
    <lineage>
        <taxon>Bacteria</taxon>
        <taxon>Pseudomonadati</taxon>
        <taxon>Aquificota</taxon>
        <taxon>Aquificia</taxon>
        <taxon>Aquificales</taxon>
        <taxon>Aquificaceae</taxon>
        <taxon>Aquifex</taxon>
    </lineage>
</organism>
<protein>
    <recommendedName>
        <fullName evidence="3">Probable DNA polymerase III subunit delta</fullName>
        <ecNumber>2.7.7.7</ecNumber>
    </recommendedName>
</protein>
<reference key="1">
    <citation type="journal article" date="1998" name="Nature">
        <title>The complete genome of the hyperthermophilic bacterium Aquifex aeolicus.</title>
        <authorList>
            <person name="Deckert G."/>
            <person name="Warren P.V."/>
            <person name="Gaasterland T."/>
            <person name="Young W.G."/>
            <person name="Lenox A.L."/>
            <person name="Graham D.E."/>
            <person name="Overbeek R."/>
            <person name="Snead M.A."/>
            <person name="Keller M."/>
            <person name="Aujay M."/>
            <person name="Huber R."/>
            <person name="Feldman R.A."/>
            <person name="Short J.M."/>
            <person name="Olsen G.J."/>
            <person name="Swanson R.V."/>
        </authorList>
    </citation>
    <scope>NUCLEOTIDE SEQUENCE [LARGE SCALE GENOMIC DNA]</scope>
    <source>
        <strain>VF5</strain>
    </source>
</reference>
<name>HOLA_AQUAE</name>